<feature type="chain" id="PRO_1000140501" description="Small ribosomal subunit protein uS8">
    <location>
        <begin position="1"/>
        <end position="130"/>
    </location>
</feature>
<comment type="function">
    <text evidence="1">One of the primary rRNA binding proteins, it binds directly to 16S rRNA central domain where it helps coordinate assembly of the platform of the 30S subunit.</text>
</comment>
<comment type="subunit">
    <text evidence="1">Part of the 30S ribosomal subunit. Contacts proteins S5 and S12.</text>
</comment>
<comment type="similarity">
    <text evidence="1">Belongs to the universal ribosomal protein uS8 family.</text>
</comment>
<dbReference type="EMBL" id="CP001091">
    <property type="protein sequence ID" value="ACE62511.1"/>
    <property type="molecule type" value="Genomic_DNA"/>
</dbReference>
<dbReference type="RefSeq" id="WP_005619408.1">
    <property type="nucleotide sequence ID" value="NC_010939.1"/>
</dbReference>
<dbReference type="SMR" id="B3GZ25"/>
<dbReference type="GeneID" id="92743641"/>
<dbReference type="KEGG" id="apa:APP7_1859"/>
<dbReference type="HOGENOM" id="CLU_098428_0_0_6"/>
<dbReference type="Proteomes" id="UP000001226">
    <property type="component" value="Chromosome"/>
</dbReference>
<dbReference type="GO" id="GO:1990904">
    <property type="term" value="C:ribonucleoprotein complex"/>
    <property type="evidence" value="ECO:0007669"/>
    <property type="project" value="UniProtKB-KW"/>
</dbReference>
<dbReference type="GO" id="GO:0005840">
    <property type="term" value="C:ribosome"/>
    <property type="evidence" value="ECO:0007669"/>
    <property type="project" value="UniProtKB-KW"/>
</dbReference>
<dbReference type="GO" id="GO:0019843">
    <property type="term" value="F:rRNA binding"/>
    <property type="evidence" value="ECO:0007669"/>
    <property type="project" value="UniProtKB-UniRule"/>
</dbReference>
<dbReference type="GO" id="GO:0003735">
    <property type="term" value="F:structural constituent of ribosome"/>
    <property type="evidence" value="ECO:0007669"/>
    <property type="project" value="InterPro"/>
</dbReference>
<dbReference type="GO" id="GO:0006412">
    <property type="term" value="P:translation"/>
    <property type="evidence" value="ECO:0007669"/>
    <property type="project" value="UniProtKB-UniRule"/>
</dbReference>
<dbReference type="FunFam" id="3.30.1370.30:FF:000003">
    <property type="entry name" value="30S ribosomal protein S8"/>
    <property type="match status" value="1"/>
</dbReference>
<dbReference type="FunFam" id="3.30.1490.10:FF:000001">
    <property type="entry name" value="30S ribosomal protein S8"/>
    <property type="match status" value="1"/>
</dbReference>
<dbReference type="Gene3D" id="3.30.1370.30">
    <property type="match status" value="1"/>
</dbReference>
<dbReference type="Gene3D" id="3.30.1490.10">
    <property type="match status" value="1"/>
</dbReference>
<dbReference type="HAMAP" id="MF_01302_B">
    <property type="entry name" value="Ribosomal_uS8_B"/>
    <property type="match status" value="1"/>
</dbReference>
<dbReference type="InterPro" id="IPR000630">
    <property type="entry name" value="Ribosomal_uS8"/>
</dbReference>
<dbReference type="InterPro" id="IPR047863">
    <property type="entry name" value="Ribosomal_uS8_CS"/>
</dbReference>
<dbReference type="InterPro" id="IPR035987">
    <property type="entry name" value="Ribosomal_uS8_sf"/>
</dbReference>
<dbReference type="NCBIfam" id="NF001109">
    <property type="entry name" value="PRK00136.1"/>
    <property type="match status" value="1"/>
</dbReference>
<dbReference type="PANTHER" id="PTHR11758">
    <property type="entry name" value="40S RIBOSOMAL PROTEIN S15A"/>
    <property type="match status" value="1"/>
</dbReference>
<dbReference type="Pfam" id="PF00410">
    <property type="entry name" value="Ribosomal_S8"/>
    <property type="match status" value="1"/>
</dbReference>
<dbReference type="SUPFAM" id="SSF56047">
    <property type="entry name" value="Ribosomal protein S8"/>
    <property type="match status" value="1"/>
</dbReference>
<dbReference type="PROSITE" id="PS00053">
    <property type="entry name" value="RIBOSOMAL_S8"/>
    <property type="match status" value="1"/>
</dbReference>
<name>RS8_ACTP7</name>
<gene>
    <name evidence="1" type="primary">rpsH</name>
    <name type="ordered locus">APP7_1859</name>
</gene>
<keyword id="KW-0687">Ribonucleoprotein</keyword>
<keyword id="KW-0689">Ribosomal protein</keyword>
<keyword id="KW-0694">RNA-binding</keyword>
<keyword id="KW-0699">rRNA-binding</keyword>
<evidence type="ECO:0000255" key="1">
    <source>
        <dbReference type="HAMAP-Rule" id="MF_01302"/>
    </source>
</evidence>
<evidence type="ECO:0000305" key="2"/>
<reference key="1">
    <citation type="submission" date="2008-06" db="EMBL/GenBank/DDBJ databases">
        <title>Genome and proteome analysis of A. pleuropneumoniae serotype 7.</title>
        <authorList>
            <person name="Linke B."/>
            <person name="Buettner F."/>
            <person name="Martinez-Arias R."/>
            <person name="Goesmann A."/>
            <person name="Baltes N."/>
            <person name="Tegetmeyer H."/>
            <person name="Singh M."/>
            <person name="Gerlach G.F."/>
        </authorList>
    </citation>
    <scope>NUCLEOTIDE SEQUENCE [LARGE SCALE GENOMIC DNA]</scope>
    <source>
        <strain>AP76</strain>
    </source>
</reference>
<organism>
    <name type="scientific">Actinobacillus pleuropneumoniae serotype 7 (strain AP76)</name>
    <dbReference type="NCBI Taxonomy" id="537457"/>
    <lineage>
        <taxon>Bacteria</taxon>
        <taxon>Pseudomonadati</taxon>
        <taxon>Pseudomonadota</taxon>
        <taxon>Gammaproteobacteria</taxon>
        <taxon>Pasteurellales</taxon>
        <taxon>Pasteurellaceae</taxon>
        <taxon>Actinobacillus</taxon>
    </lineage>
</organism>
<proteinExistence type="inferred from homology"/>
<accession>B3GZ25</accession>
<sequence length="130" mass="14098">MSMQDPIADMLTRIRNGQAANKVAISMPSSKLKVAIASVLAEEGYVESFKIVEGSKPELEITLKYFQNKPVVESIQRVSRPGLRIYKRKDELPKVMGGLGIAVVSTSKGVMTDRAARQAGLGGEIICYVA</sequence>
<protein>
    <recommendedName>
        <fullName evidence="1">Small ribosomal subunit protein uS8</fullName>
    </recommendedName>
    <alternativeName>
        <fullName evidence="2">30S ribosomal protein S8</fullName>
    </alternativeName>
</protein>